<keyword id="KW-0027">Amidation</keyword>
<keyword id="KW-0903">Direct protein sequencing</keyword>
<keyword id="KW-0527">Neuropeptide</keyword>
<keyword id="KW-0964">Secreted</keyword>
<organism>
    <name type="scientific">Austrophasma gansbaaiense</name>
    <name type="common">Gladiator</name>
    <name type="synonym">Heel-walker</name>
    <dbReference type="NCBI Taxonomy" id="253136"/>
    <lineage>
        <taxon>Eukaryota</taxon>
        <taxon>Metazoa</taxon>
        <taxon>Ecdysozoa</taxon>
        <taxon>Arthropoda</taxon>
        <taxon>Hexapoda</taxon>
        <taxon>Insecta</taxon>
        <taxon>Pterygota</taxon>
        <taxon>Neoptera</taxon>
        <taxon>Polyneoptera</taxon>
        <taxon>Mantophasmatodea</taxon>
        <taxon>Austrophasmatidae</taxon>
        <taxon>Austrophasma</taxon>
    </lineage>
</organism>
<proteinExistence type="evidence at protein level"/>
<reference evidence="5" key="1">
    <citation type="journal article" date="2012" name="Syst. Biol.">
        <title>Peptidomics-based phylogeny and biogeography of Mantophasmatodea (Hexapoda).</title>
        <authorList>
            <person name="Predel R."/>
            <person name="Neupert S."/>
            <person name="Huetteroth W."/>
            <person name="Kahnt J."/>
            <person name="Waidelich D."/>
            <person name="Roth S."/>
        </authorList>
    </citation>
    <scope>PROTEIN SEQUENCE</scope>
    <scope>AMIDATION AT LEU-16</scope>
    <source>
        <tissue evidence="3">Abdominal perisympathetic organs</tissue>
    </source>
</reference>
<name>PPK4_AUSGA</name>
<dbReference type="GO" id="GO:0005576">
    <property type="term" value="C:extracellular region"/>
    <property type="evidence" value="ECO:0007669"/>
    <property type="project" value="UniProtKB-SubCell"/>
</dbReference>
<dbReference type="GO" id="GO:0005184">
    <property type="term" value="F:neuropeptide hormone activity"/>
    <property type="evidence" value="ECO:0007669"/>
    <property type="project" value="InterPro"/>
</dbReference>
<dbReference type="GO" id="GO:0007218">
    <property type="term" value="P:neuropeptide signaling pathway"/>
    <property type="evidence" value="ECO:0007669"/>
    <property type="project" value="UniProtKB-KW"/>
</dbReference>
<dbReference type="InterPro" id="IPR001484">
    <property type="entry name" value="Pyrokinin_CS"/>
</dbReference>
<dbReference type="PROSITE" id="PS00539">
    <property type="entry name" value="PYROKININ"/>
    <property type="match status" value="1"/>
</dbReference>
<evidence type="ECO:0000250" key="1">
    <source>
        <dbReference type="UniProtKB" id="P82617"/>
    </source>
</evidence>
<evidence type="ECO:0000255" key="2"/>
<evidence type="ECO:0000269" key="3">
    <source>
    </source>
</evidence>
<evidence type="ECO:0000303" key="4">
    <source>
    </source>
</evidence>
<evidence type="ECO:0000305" key="5"/>
<evidence type="ECO:0000305" key="6">
    <source>
    </source>
</evidence>
<accession>B3A0D7</accession>
<feature type="peptide" id="PRO_0000421601" description="CAPA-Pyrokinin" evidence="3">
    <location>
        <begin position="1"/>
        <end position="16"/>
    </location>
</feature>
<feature type="modified residue" description="Leucine amide" evidence="3">
    <location>
        <position position="16"/>
    </location>
</feature>
<sequence length="16" mass="1582">SSGGGEGSGMWFGPRL</sequence>
<comment type="function">
    <text evidence="1">Myoactive.</text>
</comment>
<comment type="subcellular location">
    <subcellularLocation>
        <location evidence="6">Secreted</location>
    </subcellularLocation>
</comment>
<comment type="similarity">
    <text evidence="2">Belongs to the pyrokinin family.</text>
</comment>
<protein>
    <recommendedName>
        <fullName evidence="4">CAPA-Pyrokinin</fullName>
        <shortName evidence="4">CAPA-PK</shortName>
    </recommendedName>
    <alternativeName>
        <fullName evidence="1">FXPRL-amide</fullName>
    </alternativeName>
</protein>